<proteinExistence type="inferred from homology"/>
<organism>
    <name type="scientific">Salmonella paratyphi C (strain RKS4594)</name>
    <dbReference type="NCBI Taxonomy" id="476213"/>
    <lineage>
        <taxon>Bacteria</taxon>
        <taxon>Pseudomonadati</taxon>
        <taxon>Pseudomonadota</taxon>
        <taxon>Gammaproteobacteria</taxon>
        <taxon>Enterobacterales</taxon>
        <taxon>Enterobacteriaceae</taxon>
        <taxon>Salmonella</taxon>
    </lineage>
</organism>
<dbReference type="EC" id="2.4.2.29" evidence="1"/>
<dbReference type="EMBL" id="CP000857">
    <property type="protein sequence ID" value="ACN44599.1"/>
    <property type="molecule type" value="Genomic_DNA"/>
</dbReference>
<dbReference type="RefSeq" id="WP_000667306.1">
    <property type="nucleotide sequence ID" value="NC_012125.1"/>
</dbReference>
<dbReference type="SMR" id="C0Q7S9"/>
<dbReference type="KEGG" id="sei:SPC_0416"/>
<dbReference type="HOGENOM" id="CLU_022060_0_1_6"/>
<dbReference type="UniPathway" id="UPA00392"/>
<dbReference type="Proteomes" id="UP000001599">
    <property type="component" value="Chromosome"/>
</dbReference>
<dbReference type="GO" id="GO:0005829">
    <property type="term" value="C:cytosol"/>
    <property type="evidence" value="ECO:0007669"/>
    <property type="project" value="TreeGrafter"/>
</dbReference>
<dbReference type="GO" id="GO:0046872">
    <property type="term" value="F:metal ion binding"/>
    <property type="evidence" value="ECO:0007669"/>
    <property type="project" value="UniProtKB-KW"/>
</dbReference>
<dbReference type="GO" id="GO:0008479">
    <property type="term" value="F:tRNA-guanosine(34) queuine transglycosylase activity"/>
    <property type="evidence" value="ECO:0007669"/>
    <property type="project" value="UniProtKB-UniRule"/>
</dbReference>
<dbReference type="GO" id="GO:0008616">
    <property type="term" value="P:queuosine biosynthetic process"/>
    <property type="evidence" value="ECO:0007669"/>
    <property type="project" value="UniProtKB-UniRule"/>
</dbReference>
<dbReference type="GO" id="GO:0002099">
    <property type="term" value="P:tRNA wobble guanine modification"/>
    <property type="evidence" value="ECO:0007669"/>
    <property type="project" value="TreeGrafter"/>
</dbReference>
<dbReference type="GO" id="GO:0101030">
    <property type="term" value="P:tRNA-guanine transglycosylation"/>
    <property type="evidence" value="ECO:0007669"/>
    <property type="project" value="InterPro"/>
</dbReference>
<dbReference type="FunFam" id="3.20.20.105:FF:000001">
    <property type="entry name" value="Queuine tRNA-ribosyltransferase"/>
    <property type="match status" value="1"/>
</dbReference>
<dbReference type="Gene3D" id="3.20.20.105">
    <property type="entry name" value="Queuine tRNA-ribosyltransferase-like"/>
    <property type="match status" value="1"/>
</dbReference>
<dbReference type="HAMAP" id="MF_00168">
    <property type="entry name" value="Q_tRNA_Tgt"/>
    <property type="match status" value="1"/>
</dbReference>
<dbReference type="InterPro" id="IPR050076">
    <property type="entry name" value="ArchSynthase1/Queuine_TRR"/>
</dbReference>
<dbReference type="InterPro" id="IPR004803">
    <property type="entry name" value="TGT"/>
</dbReference>
<dbReference type="InterPro" id="IPR036511">
    <property type="entry name" value="TGT-like_sf"/>
</dbReference>
<dbReference type="InterPro" id="IPR002616">
    <property type="entry name" value="tRNA_ribo_trans-like"/>
</dbReference>
<dbReference type="NCBIfam" id="TIGR00430">
    <property type="entry name" value="Q_tRNA_tgt"/>
    <property type="match status" value="1"/>
</dbReference>
<dbReference type="NCBIfam" id="TIGR00449">
    <property type="entry name" value="tgt_general"/>
    <property type="match status" value="1"/>
</dbReference>
<dbReference type="PANTHER" id="PTHR46499">
    <property type="entry name" value="QUEUINE TRNA-RIBOSYLTRANSFERASE"/>
    <property type="match status" value="1"/>
</dbReference>
<dbReference type="PANTHER" id="PTHR46499:SF1">
    <property type="entry name" value="QUEUINE TRNA-RIBOSYLTRANSFERASE"/>
    <property type="match status" value="1"/>
</dbReference>
<dbReference type="Pfam" id="PF01702">
    <property type="entry name" value="TGT"/>
    <property type="match status" value="1"/>
</dbReference>
<dbReference type="SUPFAM" id="SSF51713">
    <property type="entry name" value="tRNA-guanine transglycosylase"/>
    <property type="match status" value="1"/>
</dbReference>
<accession>C0Q7S9</accession>
<name>TGT_SALPC</name>
<keyword id="KW-0328">Glycosyltransferase</keyword>
<keyword id="KW-0479">Metal-binding</keyword>
<keyword id="KW-0671">Queuosine biosynthesis</keyword>
<keyword id="KW-0808">Transferase</keyword>
<keyword id="KW-0819">tRNA processing</keyword>
<keyword id="KW-0862">Zinc</keyword>
<comment type="function">
    <text evidence="1">Catalyzes the base-exchange of a guanine (G) residue with the queuine precursor 7-aminomethyl-7-deazaguanine (PreQ1) at position 34 (anticodon wobble position) in tRNAs with GU(N) anticodons (tRNA-Asp, -Asn, -His and -Tyr). Catalysis occurs through a double-displacement mechanism. The nucleophile active site attacks the C1' of nucleotide 34 to detach the guanine base from the RNA, forming a covalent enzyme-RNA intermediate. The proton acceptor active site deprotonates the incoming PreQ1, allowing a nucleophilic attack on the C1' of the ribose to form the product. After dissociation, two additional enzymatic reactions on the tRNA convert PreQ1 to queuine (Q), resulting in the hypermodified nucleoside queuosine (7-(((4,5-cis-dihydroxy-2-cyclopenten-1-yl)amino)methyl)-7-deazaguanosine).</text>
</comment>
<comment type="catalytic activity">
    <reaction evidence="1">
        <text>7-aminomethyl-7-carbaguanine + guanosine(34) in tRNA = 7-aminomethyl-7-carbaguanosine(34) in tRNA + guanine</text>
        <dbReference type="Rhea" id="RHEA:24104"/>
        <dbReference type="Rhea" id="RHEA-COMP:10341"/>
        <dbReference type="Rhea" id="RHEA-COMP:10342"/>
        <dbReference type="ChEBI" id="CHEBI:16235"/>
        <dbReference type="ChEBI" id="CHEBI:58703"/>
        <dbReference type="ChEBI" id="CHEBI:74269"/>
        <dbReference type="ChEBI" id="CHEBI:82833"/>
        <dbReference type="EC" id="2.4.2.29"/>
    </reaction>
</comment>
<comment type="cofactor">
    <cofactor evidence="1">
        <name>Zn(2+)</name>
        <dbReference type="ChEBI" id="CHEBI:29105"/>
    </cofactor>
    <text evidence="1">Binds 1 zinc ion per subunit.</text>
</comment>
<comment type="pathway">
    <text evidence="1">tRNA modification; tRNA-queuosine biosynthesis.</text>
</comment>
<comment type="subunit">
    <text evidence="1">Homodimer. Within each dimer, one monomer is responsible for RNA recognition and catalysis, while the other monomer binds to the replacement base PreQ1.</text>
</comment>
<comment type="similarity">
    <text evidence="1">Belongs to the queuine tRNA-ribosyltransferase family.</text>
</comment>
<reference key="1">
    <citation type="journal article" date="2009" name="PLoS ONE">
        <title>Salmonella paratyphi C: genetic divergence from Salmonella choleraesuis and pathogenic convergence with Salmonella typhi.</title>
        <authorList>
            <person name="Liu W.-Q."/>
            <person name="Feng Y."/>
            <person name="Wang Y."/>
            <person name="Zou Q.-H."/>
            <person name="Chen F."/>
            <person name="Guo J.-T."/>
            <person name="Peng Y.-H."/>
            <person name="Jin Y."/>
            <person name="Li Y.-G."/>
            <person name="Hu S.-N."/>
            <person name="Johnston R.N."/>
            <person name="Liu G.-R."/>
            <person name="Liu S.-L."/>
        </authorList>
    </citation>
    <scope>NUCLEOTIDE SEQUENCE [LARGE SCALE GENOMIC DNA]</scope>
    <source>
        <strain>RKS4594</strain>
    </source>
</reference>
<sequence length="375" mass="42521">MKFELDTTDGRARRGRLVFDRGVVETPAFMPVGTYGTVKGMTPEEVEATGAQIILGNTFHLWLRPGQEIMKLHGDLHDFMQWKGPILTDSGGFQVFSLGDIRKITEQGVHFRNPINGDPIFLDPEKSMEIQYDLGSDIVMIFDECTPYPADWDYAKRSMEMSLRWAKRSRDRFDSLGNKNALFGIIQGSVYEDLRDISVKGLVEIGFDGYAVGGLAVGEPKADMHRILEHVCPQIPADKPRYLMGVGKPEDLVEGVRRGIDMFDCVMPTRNARNGHLFVTDGVVKIRNAKHKSDTSPLDAECDCYTCRNYSRAYLHHLDRCNEILGARLNTIHNLRYYQRLMAGLRKAIEEGKLESFVTKFYQRQGRPVPPLNVD</sequence>
<feature type="chain" id="PRO_1000198020" description="Queuine tRNA-ribosyltransferase">
    <location>
        <begin position="1"/>
        <end position="375"/>
    </location>
</feature>
<feature type="region of interest" description="RNA binding" evidence="1">
    <location>
        <begin position="245"/>
        <end position="251"/>
    </location>
</feature>
<feature type="region of interest" description="RNA binding; important for wobble base 34 recognition" evidence="1">
    <location>
        <begin position="269"/>
        <end position="273"/>
    </location>
</feature>
<feature type="active site" description="Proton acceptor" evidence="1">
    <location>
        <position position="89"/>
    </location>
</feature>
<feature type="active site" description="Nucleophile" evidence="1">
    <location>
        <position position="264"/>
    </location>
</feature>
<feature type="binding site" evidence="1">
    <location>
        <begin position="89"/>
        <end position="93"/>
    </location>
    <ligand>
        <name>substrate</name>
    </ligand>
</feature>
<feature type="binding site" evidence="1">
    <location>
        <position position="143"/>
    </location>
    <ligand>
        <name>substrate</name>
    </ligand>
</feature>
<feature type="binding site" evidence="1">
    <location>
        <position position="187"/>
    </location>
    <ligand>
        <name>substrate</name>
    </ligand>
</feature>
<feature type="binding site" evidence="1">
    <location>
        <position position="214"/>
    </location>
    <ligand>
        <name>substrate</name>
    </ligand>
</feature>
<feature type="binding site" evidence="1">
    <location>
        <position position="302"/>
    </location>
    <ligand>
        <name>Zn(2+)</name>
        <dbReference type="ChEBI" id="CHEBI:29105"/>
    </ligand>
</feature>
<feature type="binding site" evidence="1">
    <location>
        <position position="304"/>
    </location>
    <ligand>
        <name>Zn(2+)</name>
        <dbReference type="ChEBI" id="CHEBI:29105"/>
    </ligand>
</feature>
<feature type="binding site" evidence="1">
    <location>
        <position position="307"/>
    </location>
    <ligand>
        <name>Zn(2+)</name>
        <dbReference type="ChEBI" id="CHEBI:29105"/>
    </ligand>
</feature>
<feature type="binding site" evidence="1">
    <location>
        <position position="333"/>
    </location>
    <ligand>
        <name>Zn(2+)</name>
        <dbReference type="ChEBI" id="CHEBI:29105"/>
    </ligand>
</feature>
<gene>
    <name evidence="1" type="primary">tgt</name>
    <name type="ordered locus">SPC_0416</name>
</gene>
<evidence type="ECO:0000255" key="1">
    <source>
        <dbReference type="HAMAP-Rule" id="MF_00168"/>
    </source>
</evidence>
<protein>
    <recommendedName>
        <fullName evidence="1">Queuine tRNA-ribosyltransferase</fullName>
        <ecNumber evidence="1">2.4.2.29</ecNumber>
    </recommendedName>
    <alternativeName>
        <fullName evidence="1">Guanine insertion enzyme</fullName>
    </alternativeName>
    <alternativeName>
        <fullName evidence="1">tRNA-guanine transglycosylase</fullName>
    </alternativeName>
</protein>